<organism>
    <name type="scientific">Buchnera aphidicola subsp. Acyrthosiphon pisum (strain Tuc7)</name>
    <dbReference type="NCBI Taxonomy" id="561501"/>
    <lineage>
        <taxon>Bacteria</taxon>
        <taxon>Pseudomonadati</taxon>
        <taxon>Pseudomonadota</taxon>
        <taxon>Gammaproteobacteria</taxon>
        <taxon>Enterobacterales</taxon>
        <taxon>Erwiniaceae</taxon>
        <taxon>Buchnera</taxon>
    </lineage>
</organism>
<accession>B8D856</accession>
<feature type="chain" id="PRO_1000134407" description="Protein TusC">
    <location>
        <begin position="1"/>
        <end position="119"/>
    </location>
</feature>
<gene>
    <name evidence="1" type="primary">tusC</name>
    <name type="ordered locus">BUAPTUC7_525</name>
</gene>
<sequence>MKMVAFVFSHAPHGISLGREGLDAIFSISSIFKKISVFFIGDGVLQLIKNQQPEHILARNYTSSFSILSLYNIKDLYCCKASLLERGLNNNNNFILNIDVLDSYNLRLKLDNYDAIINF</sequence>
<keyword id="KW-0963">Cytoplasm</keyword>
<keyword id="KW-0819">tRNA processing</keyword>
<name>TUSC_BUCAT</name>
<comment type="function">
    <text evidence="1">Part of a sulfur-relay system required for 2-thiolation of 5-methylaminomethyl-2-thiouridine (mnm(5)s(2)U) at tRNA wobble positions.</text>
</comment>
<comment type="subunit">
    <text evidence="1">Heterohexamer, formed by a dimer of trimers. The hexameric TusBCD complex contains 2 copies each of TusB, TusC and TusD. The TusBCD complex interacts with TusE.</text>
</comment>
<comment type="subcellular location">
    <subcellularLocation>
        <location evidence="1">Cytoplasm</location>
    </subcellularLocation>
</comment>
<comment type="similarity">
    <text evidence="1">Belongs to the DsrF/TusC family.</text>
</comment>
<protein>
    <recommendedName>
        <fullName evidence="1">Protein TusC</fullName>
    </recommendedName>
    <alternativeName>
        <fullName evidence="1">tRNA 2-thiouridine synthesizing protein C</fullName>
    </alternativeName>
</protein>
<reference key="1">
    <citation type="journal article" date="2009" name="Science">
        <title>The dynamics and time scale of ongoing genomic erosion in symbiotic bacteria.</title>
        <authorList>
            <person name="Moran N.A."/>
            <person name="McLaughlin H.J."/>
            <person name="Sorek R."/>
        </authorList>
    </citation>
    <scope>NUCLEOTIDE SEQUENCE [LARGE SCALE GENOMIC DNA]</scope>
    <source>
        <strain>Tuc7</strain>
    </source>
</reference>
<evidence type="ECO:0000255" key="1">
    <source>
        <dbReference type="HAMAP-Rule" id="MF_00389"/>
    </source>
</evidence>
<dbReference type="EMBL" id="CP001158">
    <property type="protein sequence ID" value="ACL30321.1"/>
    <property type="molecule type" value="Genomic_DNA"/>
</dbReference>
<dbReference type="RefSeq" id="WP_010896150.1">
    <property type="nucleotide sequence ID" value="NC_011834.1"/>
</dbReference>
<dbReference type="SMR" id="B8D856"/>
<dbReference type="KEGG" id="bau:BUAPTUC7_525"/>
<dbReference type="HOGENOM" id="CLU_155943_1_0_6"/>
<dbReference type="GO" id="GO:0005737">
    <property type="term" value="C:cytoplasm"/>
    <property type="evidence" value="ECO:0007669"/>
    <property type="project" value="UniProtKB-SubCell"/>
</dbReference>
<dbReference type="GO" id="GO:0008033">
    <property type="term" value="P:tRNA processing"/>
    <property type="evidence" value="ECO:0007669"/>
    <property type="project" value="UniProtKB-UniRule"/>
</dbReference>
<dbReference type="Gene3D" id="3.40.1260.10">
    <property type="entry name" value="DsrEFH-like"/>
    <property type="match status" value="1"/>
</dbReference>
<dbReference type="HAMAP" id="MF_00389">
    <property type="entry name" value="Thiourid_synth_C"/>
    <property type="match status" value="1"/>
</dbReference>
<dbReference type="InterPro" id="IPR027396">
    <property type="entry name" value="DsrEFH-like"/>
</dbReference>
<dbReference type="InterPro" id="IPR003787">
    <property type="entry name" value="Sulphur_relay_DsrE/F-like"/>
</dbReference>
<dbReference type="InterPro" id="IPR037450">
    <property type="entry name" value="Sulphur_relay_TusC"/>
</dbReference>
<dbReference type="InterPro" id="IPR017462">
    <property type="entry name" value="Sulphur_relay_TusC/DsrF"/>
</dbReference>
<dbReference type="NCBIfam" id="NF001238">
    <property type="entry name" value="PRK00211.1"/>
    <property type="match status" value="1"/>
</dbReference>
<dbReference type="NCBIfam" id="TIGR03010">
    <property type="entry name" value="sulf_tusC_dsrF"/>
    <property type="match status" value="1"/>
</dbReference>
<dbReference type="PANTHER" id="PTHR38780">
    <property type="entry name" value="PROTEIN TUSC"/>
    <property type="match status" value="1"/>
</dbReference>
<dbReference type="PANTHER" id="PTHR38780:SF1">
    <property type="entry name" value="PROTEIN TUSC"/>
    <property type="match status" value="1"/>
</dbReference>
<dbReference type="Pfam" id="PF02635">
    <property type="entry name" value="DsrE"/>
    <property type="match status" value="1"/>
</dbReference>
<dbReference type="SUPFAM" id="SSF75169">
    <property type="entry name" value="DsrEFH-like"/>
    <property type="match status" value="1"/>
</dbReference>
<proteinExistence type="inferred from homology"/>